<protein>
    <recommendedName>
        <fullName evidence="1">UDP-N-acetylglucosamine 1-carboxyvinyltransferase 2</fullName>
        <ecNumber evidence="1">2.5.1.7</ecNumber>
    </recommendedName>
    <alternativeName>
        <fullName evidence="1">Enoylpyruvate transferase 2</fullName>
    </alternativeName>
    <alternativeName>
        <fullName evidence="1">UDP-N-acetylglucosamine enolpyruvyl transferase 2</fullName>
        <shortName evidence="1">EPT 2</shortName>
    </alternativeName>
</protein>
<reference key="1">
    <citation type="journal article" date="2004" name="Nat. Genet.">
        <title>Evidence in the Legionella pneumophila genome for exploitation of host cell functions and high genome plasticity.</title>
        <authorList>
            <person name="Cazalet C."/>
            <person name="Rusniok C."/>
            <person name="Brueggemann H."/>
            <person name="Zidane N."/>
            <person name="Magnier A."/>
            <person name="Ma L."/>
            <person name="Tichit M."/>
            <person name="Jarraud S."/>
            <person name="Bouchier C."/>
            <person name="Vandenesch F."/>
            <person name="Kunst F."/>
            <person name="Etienne J."/>
            <person name="Glaser P."/>
            <person name="Buchrieser C."/>
        </authorList>
    </citation>
    <scope>NUCLEOTIDE SEQUENCE [LARGE SCALE GENOMIC DNA]</scope>
    <source>
        <strain>Lens</strain>
    </source>
</reference>
<proteinExistence type="inferred from homology"/>
<accession>Q5WY61</accession>
<name>MURA2_LEGPL</name>
<evidence type="ECO:0000255" key="1">
    <source>
        <dbReference type="HAMAP-Rule" id="MF_00111"/>
    </source>
</evidence>
<sequence>MDKLLINGGKALHGEVVISGAKNAALPIMAASLLASDHVTISNVPHLKDITTMMELLGQLGAHLIVDEKMNVQVDSSQVNEFVAPYDLVKTMRASILVLGPMLARFGKADVSLPGGCAIGTRPVDLHLKALRAMGADITVKNGYINARCKKGRLQGKRLMFDTVTVTGTENVLMAAVLAEGITTIKNAAREPEVVDLANFLIQMGAKIRGAGTSTIEVEGVESLNGGTYSVMSDRIEAGTYLAAGALTRGQVTVKKVRPDTLLSQLCKFEEAGAELTIGEDWVSLNMHNKRPQAVNIATAPYPAFATDMQAQFMAMNSVAEGSSTIIETIFENRFMHVQELQRMGANIQLNGNTAIVHGVEKLTGAPVMATDLRASASLILAGLVAEGETVVERIYHVDRGYERIEEKLSLLGADIKRVSDR</sequence>
<feature type="chain" id="PRO_0000231218" description="UDP-N-acetylglucosamine 1-carboxyvinyltransferase 2">
    <location>
        <begin position="1"/>
        <end position="422"/>
    </location>
</feature>
<feature type="active site" description="Proton donor" evidence="1">
    <location>
        <position position="117"/>
    </location>
</feature>
<feature type="binding site" evidence="1">
    <location>
        <begin position="22"/>
        <end position="23"/>
    </location>
    <ligand>
        <name>phosphoenolpyruvate</name>
        <dbReference type="ChEBI" id="CHEBI:58702"/>
    </ligand>
</feature>
<feature type="binding site" evidence="1">
    <location>
        <position position="93"/>
    </location>
    <ligand>
        <name>UDP-N-acetyl-alpha-D-glucosamine</name>
        <dbReference type="ChEBI" id="CHEBI:57705"/>
    </ligand>
</feature>
<feature type="binding site" evidence="1">
    <location>
        <begin position="122"/>
        <end position="126"/>
    </location>
    <ligand>
        <name>UDP-N-acetyl-alpha-D-glucosamine</name>
        <dbReference type="ChEBI" id="CHEBI:57705"/>
    </ligand>
</feature>
<feature type="binding site" evidence="1">
    <location>
        <position position="308"/>
    </location>
    <ligand>
        <name>UDP-N-acetyl-alpha-D-glucosamine</name>
        <dbReference type="ChEBI" id="CHEBI:57705"/>
    </ligand>
</feature>
<feature type="binding site" evidence="1">
    <location>
        <position position="330"/>
    </location>
    <ligand>
        <name>UDP-N-acetyl-alpha-D-glucosamine</name>
        <dbReference type="ChEBI" id="CHEBI:57705"/>
    </ligand>
</feature>
<feature type="modified residue" description="2-(S-cysteinyl)pyruvic acid O-phosphothioketal" evidence="1">
    <location>
        <position position="117"/>
    </location>
</feature>
<keyword id="KW-0131">Cell cycle</keyword>
<keyword id="KW-0132">Cell division</keyword>
<keyword id="KW-0133">Cell shape</keyword>
<keyword id="KW-0961">Cell wall biogenesis/degradation</keyword>
<keyword id="KW-0963">Cytoplasm</keyword>
<keyword id="KW-0573">Peptidoglycan synthesis</keyword>
<keyword id="KW-0670">Pyruvate</keyword>
<keyword id="KW-0808">Transferase</keyword>
<comment type="function">
    <text evidence="1">Cell wall formation. Adds enolpyruvyl to UDP-N-acetylglucosamine.</text>
</comment>
<comment type="catalytic activity">
    <reaction evidence="1">
        <text>phosphoenolpyruvate + UDP-N-acetyl-alpha-D-glucosamine = UDP-N-acetyl-3-O-(1-carboxyvinyl)-alpha-D-glucosamine + phosphate</text>
        <dbReference type="Rhea" id="RHEA:18681"/>
        <dbReference type="ChEBI" id="CHEBI:43474"/>
        <dbReference type="ChEBI" id="CHEBI:57705"/>
        <dbReference type="ChEBI" id="CHEBI:58702"/>
        <dbReference type="ChEBI" id="CHEBI:68483"/>
        <dbReference type="EC" id="2.5.1.7"/>
    </reaction>
</comment>
<comment type="pathway">
    <text evidence="1">Cell wall biogenesis; peptidoglycan biosynthesis.</text>
</comment>
<comment type="subcellular location">
    <subcellularLocation>
        <location evidence="1">Cytoplasm</location>
    </subcellularLocation>
</comment>
<comment type="similarity">
    <text evidence="1">Belongs to the EPSP synthase family. MurA subfamily.</text>
</comment>
<dbReference type="EC" id="2.5.1.7" evidence="1"/>
<dbReference type="EMBL" id="CR628337">
    <property type="protein sequence ID" value="CAH15112.1"/>
    <property type="molecule type" value="Genomic_DNA"/>
</dbReference>
<dbReference type="RefSeq" id="WP_011215028.1">
    <property type="nucleotide sequence ID" value="NC_006369.1"/>
</dbReference>
<dbReference type="SMR" id="Q5WY61"/>
<dbReference type="KEGG" id="lpf:lpl0878"/>
<dbReference type="LegioList" id="lpl0878"/>
<dbReference type="HOGENOM" id="CLU_027387_0_0_6"/>
<dbReference type="UniPathway" id="UPA00219"/>
<dbReference type="Proteomes" id="UP000002517">
    <property type="component" value="Chromosome"/>
</dbReference>
<dbReference type="GO" id="GO:0005737">
    <property type="term" value="C:cytoplasm"/>
    <property type="evidence" value="ECO:0007669"/>
    <property type="project" value="UniProtKB-SubCell"/>
</dbReference>
<dbReference type="GO" id="GO:0008760">
    <property type="term" value="F:UDP-N-acetylglucosamine 1-carboxyvinyltransferase activity"/>
    <property type="evidence" value="ECO:0007669"/>
    <property type="project" value="UniProtKB-UniRule"/>
</dbReference>
<dbReference type="GO" id="GO:0051301">
    <property type="term" value="P:cell division"/>
    <property type="evidence" value="ECO:0007669"/>
    <property type="project" value="UniProtKB-KW"/>
</dbReference>
<dbReference type="GO" id="GO:0071555">
    <property type="term" value="P:cell wall organization"/>
    <property type="evidence" value="ECO:0007669"/>
    <property type="project" value="UniProtKB-KW"/>
</dbReference>
<dbReference type="GO" id="GO:0009252">
    <property type="term" value="P:peptidoglycan biosynthetic process"/>
    <property type="evidence" value="ECO:0007669"/>
    <property type="project" value="UniProtKB-UniRule"/>
</dbReference>
<dbReference type="GO" id="GO:0008360">
    <property type="term" value="P:regulation of cell shape"/>
    <property type="evidence" value="ECO:0007669"/>
    <property type="project" value="UniProtKB-KW"/>
</dbReference>
<dbReference type="GO" id="GO:0019277">
    <property type="term" value="P:UDP-N-acetylgalactosamine biosynthetic process"/>
    <property type="evidence" value="ECO:0007669"/>
    <property type="project" value="InterPro"/>
</dbReference>
<dbReference type="CDD" id="cd01555">
    <property type="entry name" value="UdpNAET"/>
    <property type="match status" value="1"/>
</dbReference>
<dbReference type="FunFam" id="3.65.10.10:FF:000001">
    <property type="entry name" value="UDP-N-acetylglucosamine 1-carboxyvinyltransferase"/>
    <property type="match status" value="1"/>
</dbReference>
<dbReference type="Gene3D" id="3.65.10.10">
    <property type="entry name" value="Enolpyruvate transferase domain"/>
    <property type="match status" value="2"/>
</dbReference>
<dbReference type="HAMAP" id="MF_00111">
    <property type="entry name" value="MurA"/>
    <property type="match status" value="1"/>
</dbReference>
<dbReference type="InterPro" id="IPR001986">
    <property type="entry name" value="Enolpyruvate_Tfrase_dom"/>
</dbReference>
<dbReference type="InterPro" id="IPR036968">
    <property type="entry name" value="Enolpyruvate_Tfrase_sf"/>
</dbReference>
<dbReference type="InterPro" id="IPR050068">
    <property type="entry name" value="MurA_subfamily"/>
</dbReference>
<dbReference type="InterPro" id="IPR013792">
    <property type="entry name" value="RNA3'P_cycl/enolpyr_Trfase_a/b"/>
</dbReference>
<dbReference type="InterPro" id="IPR005750">
    <property type="entry name" value="UDP_GlcNAc_COvinyl_MurA"/>
</dbReference>
<dbReference type="NCBIfam" id="TIGR01072">
    <property type="entry name" value="murA"/>
    <property type="match status" value="1"/>
</dbReference>
<dbReference type="NCBIfam" id="NF006873">
    <property type="entry name" value="PRK09369.1"/>
    <property type="match status" value="1"/>
</dbReference>
<dbReference type="PANTHER" id="PTHR43783">
    <property type="entry name" value="UDP-N-ACETYLGLUCOSAMINE 1-CARBOXYVINYLTRANSFERASE"/>
    <property type="match status" value="1"/>
</dbReference>
<dbReference type="PANTHER" id="PTHR43783:SF1">
    <property type="entry name" value="UDP-N-ACETYLGLUCOSAMINE 1-CARBOXYVINYLTRANSFERASE"/>
    <property type="match status" value="1"/>
</dbReference>
<dbReference type="Pfam" id="PF00275">
    <property type="entry name" value="EPSP_synthase"/>
    <property type="match status" value="1"/>
</dbReference>
<dbReference type="SUPFAM" id="SSF55205">
    <property type="entry name" value="EPT/RTPC-like"/>
    <property type="match status" value="1"/>
</dbReference>
<organism>
    <name type="scientific">Legionella pneumophila (strain Lens)</name>
    <dbReference type="NCBI Taxonomy" id="297245"/>
    <lineage>
        <taxon>Bacteria</taxon>
        <taxon>Pseudomonadati</taxon>
        <taxon>Pseudomonadota</taxon>
        <taxon>Gammaproteobacteria</taxon>
        <taxon>Legionellales</taxon>
        <taxon>Legionellaceae</taxon>
        <taxon>Legionella</taxon>
    </lineage>
</organism>
<gene>
    <name evidence="1" type="primary">murA2</name>
    <name type="synonym">murA</name>
    <name type="ordered locus">lpl0878</name>
</gene>